<dbReference type="EC" id="2.7.2.1" evidence="1"/>
<dbReference type="EMBL" id="CP001096">
    <property type="protein sequence ID" value="ACF03535.1"/>
    <property type="molecule type" value="Genomic_DNA"/>
</dbReference>
<dbReference type="RefSeq" id="WP_012497726.1">
    <property type="nucleotide sequence ID" value="NC_011004.1"/>
</dbReference>
<dbReference type="SMR" id="B3QA57"/>
<dbReference type="KEGG" id="rpt:Rpal_5046"/>
<dbReference type="HOGENOM" id="CLU_020352_0_0_5"/>
<dbReference type="OrthoDB" id="9802453at2"/>
<dbReference type="UniPathway" id="UPA00340">
    <property type="reaction ID" value="UER00458"/>
</dbReference>
<dbReference type="Proteomes" id="UP000001725">
    <property type="component" value="Chromosome"/>
</dbReference>
<dbReference type="GO" id="GO:0005829">
    <property type="term" value="C:cytosol"/>
    <property type="evidence" value="ECO:0007669"/>
    <property type="project" value="TreeGrafter"/>
</dbReference>
<dbReference type="GO" id="GO:0008776">
    <property type="term" value="F:acetate kinase activity"/>
    <property type="evidence" value="ECO:0007669"/>
    <property type="project" value="UniProtKB-UniRule"/>
</dbReference>
<dbReference type="GO" id="GO:0005524">
    <property type="term" value="F:ATP binding"/>
    <property type="evidence" value="ECO:0007669"/>
    <property type="project" value="UniProtKB-KW"/>
</dbReference>
<dbReference type="GO" id="GO:0000287">
    <property type="term" value="F:magnesium ion binding"/>
    <property type="evidence" value="ECO:0007669"/>
    <property type="project" value="UniProtKB-UniRule"/>
</dbReference>
<dbReference type="GO" id="GO:0006083">
    <property type="term" value="P:acetate metabolic process"/>
    <property type="evidence" value="ECO:0007669"/>
    <property type="project" value="TreeGrafter"/>
</dbReference>
<dbReference type="GO" id="GO:0006085">
    <property type="term" value="P:acetyl-CoA biosynthetic process"/>
    <property type="evidence" value="ECO:0007669"/>
    <property type="project" value="UniProtKB-UniRule"/>
</dbReference>
<dbReference type="Gene3D" id="3.30.420.40">
    <property type="match status" value="2"/>
</dbReference>
<dbReference type="HAMAP" id="MF_00020">
    <property type="entry name" value="Acetate_kinase"/>
    <property type="match status" value="1"/>
</dbReference>
<dbReference type="InterPro" id="IPR004372">
    <property type="entry name" value="Ac/propionate_kinase"/>
</dbReference>
<dbReference type="InterPro" id="IPR000890">
    <property type="entry name" value="Aliphatic_acid_kin_short-chain"/>
</dbReference>
<dbReference type="InterPro" id="IPR023865">
    <property type="entry name" value="Aliphatic_acid_kinase_CS"/>
</dbReference>
<dbReference type="InterPro" id="IPR043129">
    <property type="entry name" value="ATPase_NBD"/>
</dbReference>
<dbReference type="NCBIfam" id="TIGR00016">
    <property type="entry name" value="ackA"/>
    <property type="match status" value="1"/>
</dbReference>
<dbReference type="PANTHER" id="PTHR21060">
    <property type="entry name" value="ACETATE KINASE"/>
    <property type="match status" value="1"/>
</dbReference>
<dbReference type="PANTHER" id="PTHR21060:SF21">
    <property type="entry name" value="ACETATE KINASE"/>
    <property type="match status" value="1"/>
</dbReference>
<dbReference type="Pfam" id="PF00871">
    <property type="entry name" value="Acetate_kinase"/>
    <property type="match status" value="1"/>
</dbReference>
<dbReference type="PIRSF" id="PIRSF000722">
    <property type="entry name" value="Acetate_prop_kin"/>
    <property type="match status" value="1"/>
</dbReference>
<dbReference type="PRINTS" id="PR00471">
    <property type="entry name" value="ACETATEKNASE"/>
</dbReference>
<dbReference type="SUPFAM" id="SSF53067">
    <property type="entry name" value="Actin-like ATPase domain"/>
    <property type="match status" value="2"/>
</dbReference>
<dbReference type="PROSITE" id="PS01075">
    <property type="entry name" value="ACETATE_KINASE_1"/>
    <property type="match status" value="1"/>
</dbReference>
<evidence type="ECO:0000255" key="1">
    <source>
        <dbReference type="HAMAP-Rule" id="MF_00020"/>
    </source>
</evidence>
<gene>
    <name evidence="1" type="primary">ackA</name>
    <name type="ordered locus">Rpal_5046</name>
</gene>
<proteinExistence type="inferred from homology"/>
<name>ACKA_RHOPT</name>
<reference key="1">
    <citation type="submission" date="2008-05" db="EMBL/GenBank/DDBJ databases">
        <title>Complete sequence of Rhodopseudomonas palustris TIE-1.</title>
        <authorList>
            <consortium name="US DOE Joint Genome Institute"/>
            <person name="Lucas S."/>
            <person name="Copeland A."/>
            <person name="Lapidus A."/>
            <person name="Glavina del Rio T."/>
            <person name="Dalin E."/>
            <person name="Tice H."/>
            <person name="Pitluck S."/>
            <person name="Chain P."/>
            <person name="Malfatti S."/>
            <person name="Shin M."/>
            <person name="Vergez L."/>
            <person name="Lang D."/>
            <person name="Schmutz J."/>
            <person name="Larimer F."/>
            <person name="Land M."/>
            <person name="Hauser L."/>
            <person name="Kyrpides N."/>
            <person name="Mikhailova N."/>
            <person name="Emerson D."/>
            <person name="Newman D.K."/>
            <person name="Roden E."/>
            <person name="Richardson P."/>
        </authorList>
    </citation>
    <scope>NUCLEOTIDE SEQUENCE [LARGE SCALE GENOMIC DNA]</scope>
    <source>
        <strain>TIE-1</strain>
    </source>
</reference>
<protein>
    <recommendedName>
        <fullName evidence="1">Acetate kinase</fullName>
        <ecNumber evidence="1">2.7.2.1</ecNumber>
    </recommendedName>
    <alternativeName>
        <fullName evidence="1">Acetokinase</fullName>
    </alternativeName>
</protein>
<sequence length="398" mass="42736">MSDVLLVLNAGSSSIKFALYEAHTEPTADHLICEGGIGSLGHRPHFKVVNSDGSTRYDTYLPEGTSHDDAMAVLIGWIETTFPEHRLSAVGHRVVHGGALFDGPVDVTPEVIAQLRAFDRLAPLHQPHNVSAIEALAKLHPSLTQIACFDTAFHHRLPEVATAFALPRELTEQGVRRYGFHGLSYEYIAGRLPDVAGQAVADGRVVVAHLGAGASMCAMLRCRSIATTMGFTALDGLMMGSRCGELDPGVVLYLLEEKSMTAREIEDLLYRESGLLGVSGISDDMRTLLASDDPHACEAIELFVYRIARELGSLAAALGGLDALVFTGGIGEHASEIRRRVCEQAAWLGVTLDPDANARLSGAGRISAPDSKVSAWAIPTDEDLMIARHVWRLADGGR</sequence>
<organism>
    <name type="scientific">Rhodopseudomonas palustris (strain TIE-1)</name>
    <dbReference type="NCBI Taxonomy" id="395960"/>
    <lineage>
        <taxon>Bacteria</taxon>
        <taxon>Pseudomonadati</taxon>
        <taxon>Pseudomonadota</taxon>
        <taxon>Alphaproteobacteria</taxon>
        <taxon>Hyphomicrobiales</taxon>
        <taxon>Nitrobacteraceae</taxon>
        <taxon>Rhodopseudomonas</taxon>
    </lineage>
</organism>
<comment type="function">
    <text evidence="1">Catalyzes the formation of acetyl phosphate from acetate and ATP. Can also catalyze the reverse reaction.</text>
</comment>
<comment type="catalytic activity">
    <reaction evidence="1">
        <text>acetate + ATP = acetyl phosphate + ADP</text>
        <dbReference type="Rhea" id="RHEA:11352"/>
        <dbReference type="ChEBI" id="CHEBI:22191"/>
        <dbReference type="ChEBI" id="CHEBI:30089"/>
        <dbReference type="ChEBI" id="CHEBI:30616"/>
        <dbReference type="ChEBI" id="CHEBI:456216"/>
        <dbReference type="EC" id="2.7.2.1"/>
    </reaction>
</comment>
<comment type="cofactor">
    <cofactor evidence="1">
        <name>Mg(2+)</name>
        <dbReference type="ChEBI" id="CHEBI:18420"/>
    </cofactor>
    <cofactor evidence="1">
        <name>Mn(2+)</name>
        <dbReference type="ChEBI" id="CHEBI:29035"/>
    </cofactor>
    <text evidence="1">Mg(2+). Can also accept Mn(2+).</text>
</comment>
<comment type="pathway">
    <text evidence="1">Metabolic intermediate biosynthesis; acetyl-CoA biosynthesis; acetyl-CoA from acetate: step 1/2.</text>
</comment>
<comment type="subunit">
    <text evidence="1">Homodimer.</text>
</comment>
<comment type="subcellular location">
    <subcellularLocation>
        <location evidence="1">Cytoplasm</location>
    </subcellularLocation>
</comment>
<comment type="similarity">
    <text evidence="1">Belongs to the acetokinase family.</text>
</comment>
<keyword id="KW-0067">ATP-binding</keyword>
<keyword id="KW-0963">Cytoplasm</keyword>
<keyword id="KW-0418">Kinase</keyword>
<keyword id="KW-0460">Magnesium</keyword>
<keyword id="KW-0479">Metal-binding</keyword>
<keyword id="KW-0547">Nucleotide-binding</keyword>
<keyword id="KW-0808">Transferase</keyword>
<feature type="chain" id="PRO_1000089992" description="Acetate kinase">
    <location>
        <begin position="1"/>
        <end position="398"/>
    </location>
</feature>
<feature type="active site" description="Proton donor/acceptor" evidence="1">
    <location>
        <position position="150"/>
    </location>
</feature>
<feature type="binding site" evidence="1">
    <location>
        <position position="9"/>
    </location>
    <ligand>
        <name>Mg(2+)</name>
        <dbReference type="ChEBI" id="CHEBI:18420"/>
    </ligand>
</feature>
<feature type="binding site" evidence="1">
    <location>
        <position position="16"/>
    </location>
    <ligand>
        <name>ATP</name>
        <dbReference type="ChEBI" id="CHEBI:30616"/>
    </ligand>
</feature>
<feature type="binding site" evidence="1">
    <location>
        <position position="93"/>
    </location>
    <ligand>
        <name>substrate</name>
    </ligand>
</feature>
<feature type="binding site" evidence="1">
    <location>
        <begin position="209"/>
        <end position="213"/>
    </location>
    <ligand>
        <name>ATP</name>
        <dbReference type="ChEBI" id="CHEBI:30616"/>
    </ligand>
</feature>
<feature type="binding site" evidence="1">
    <location>
        <begin position="284"/>
        <end position="286"/>
    </location>
    <ligand>
        <name>ATP</name>
        <dbReference type="ChEBI" id="CHEBI:30616"/>
    </ligand>
</feature>
<feature type="binding site" evidence="1">
    <location>
        <begin position="329"/>
        <end position="333"/>
    </location>
    <ligand>
        <name>ATP</name>
        <dbReference type="ChEBI" id="CHEBI:30616"/>
    </ligand>
</feature>
<feature type="binding site" evidence="1">
    <location>
        <position position="382"/>
    </location>
    <ligand>
        <name>Mg(2+)</name>
        <dbReference type="ChEBI" id="CHEBI:18420"/>
    </ligand>
</feature>
<feature type="site" description="Transition state stabilizer" evidence="1">
    <location>
        <position position="181"/>
    </location>
</feature>
<feature type="site" description="Transition state stabilizer" evidence="1">
    <location>
        <position position="242"/>
    </location>
</feature>
<accession>B3QA57</accession>